<accession>Q5NDF1</accession>
<comment type="function">
    <text evidence="1">O-linked mannose beta-1,4-N-acetylglucosaminyltransferase that transfers UDP-N-acetyl-D-glucosamine to the 4-position of the mannose to generate N-acetyl-D-glucosamine-beta-1,4-O-D-mannosylprotein. Involved in the biosynthesis of the phosphorylated O-mannosyl trisaccharide (N-acetylgalactosamine-beta-3-N-acetylglucosamine-beta-4-(phosphate-6-)mannose), a carbohydrate structure present in alpha-dystroglycan (DAG1), which is required for binding laminin G-like domain-containing extracellular proteins with high affinity (By similarity).</text>
</comment>
<comment type="catalytic activity">
    <reaction evidence="1">
        <text>3-O-(alpha-D-mannosyl)-L-threonyl-[protein] + UDP-N-acetyl-alpha-D-glucosamine = 3-O-(N-acetyl-beta-D-glucosaminyl-(1-&gt;4)-alpha-D-mannosyl)-L-threonyl-[protein] + UDP + H(+)</text>
        <dbReference type="Rhea" id="RHEA:37663"/>
        <dbReference type="Rhea" id="RHEA-COMP:13547"/>
        <dbReference type="Rhea" id="RHEA-COMP:13618"/>
        <dbReference type="ChEBI" id="CHEBI:15378"/>
        <dbReference type="ChEBI" id="CHEBI:57705"/>
        <dbReference type="ChEBI" id="CHEBI:58223"/>
        <dbReference type="ChEBI" id="CHEBI:137323"/>
        <dbReference type="ChEBI" id="CHEBI:137540"/>
        <dbReference type="EC" id="2.4.1.312"/>
    </reaction>
</comment>
<comment type="pathway">
    <text evidence="1">Protein modification; protein glycosylation.</text>
</comment>
<comment type="subcellular location">
    <subcellularLocation>
        <location evidence="1">Endoplasmic reticulum membrane</location>
        <topology evidence="1">Single-pass type II membrane protein</topology>
    </subcellularLocation>
</comment>
<comment type="similarity">
    <text evidence="4">Belongs to the glycosyltransferase 61 family.</text>
</comment>
<gene>
    <name type="primary">POMGNT2</name>
    <name type="synonym">AGO61</name>
    <name type="synonym">GTDC2</name>
</gene>
<reference key="1">
    <citation type="submission" date="2004-12" db="EMBL/GenBank/DDBJ databases">
        <title>Phylogeny of xylosyltransferases.</title>
        <authorList>
            <person name="Kiefer-Meyer M.C."/>
            <person name="Pagny S."/>
            <person name="Durambure G."/>
            <person name="Faye L."/>
            <person name="Gomord V."/>
            <person name="Mollicone R."/>
            <person name="Oriol R."/>
        </authorList>
    </citation>
    <scope>NUCLEOTIDE SEQUENCE [MRNA]</scope>
</reference>
<keyword id="KW-0256">Endoplasmic reticulum</keyword>
<keyword id="KW-0325">Glycoprotein</keyword>
<keyword id="KW-0328">Glycosyltransferase</keyword>
<keyword id="KW-0472">Membrane</keyword>
<keyword id="KW-1185">Reference proteome</keyword>
<keyword id="KW-0735">Signal-anchor</keyword>
<keyword id="KW-0808">Transferase</keyword>
<keyword id="KW-0812">Transmembrane</keyword>
<keyword id="KW-1133">Transmembrane helix</keyword>
<protein>
    <recommendedName>
        <fullName>Protein O-linked-mannose beta-1,4-N-acetylglucosaminyltransferase 2</fullName>
        <shortName>POMGnT2</shortName>
        <ecNumber evidence="1">2.4.1.312</ecNumber>
    </recommendedName>
    <alternativeName>
        <fullName>Extracellular O-linked N-acetylglucosamine transferase-like</fullName>
    </alternativeName>
    <alternativeName>
        <fullName>Glycosyltransferase-like domain-containing protein 2</fullName>
    </alternativeName>
</protein>
<sequence length="580" mass="66555">MHLSAVFNALLVSVLAAVLWKHVRLREHAATLEEELALGRQATEPAPALRIDYPKALQILMEGGTHMVCTGRTHTDRICRFKWLCYSNEAEEFIFFHGNTSVMLPNLGSRRFQPALLDLSTVEDHNTQYFNFVELPAAALRFMPKPVFVPDVALIANRFNPDNLMHVFHDDLLPLFYTLRQFPGLAHEARLFFMEGWGEGAHFDLYKLLSPKQPLLRAQLKTLGRLLCFSHAFVGLSKITTWYQYGFVQPQGPKANILVSGNEIRQFARFMTEKLNVSHTGVPLGEEYILVFSRTQNRLILNEAELLLALAQEFQMKTVTVSLEDHAFADVVRLVSNASMLVSMHGAQLVTTLFLPRGATVVELFPYAVNPDHYTPYKTLAMLPGMDLQYVAWRNMMPENTVTHPERPWDQGGITHLDRAEQARILQSREVPRHLCCRNPEWLFRIYQDTKVDIPSLIQTIRRVVKGRPGPRKQKWTVGLYPGKVREARCQASVHGASEARLTVSWQIPWNLKYLKVREVKYEVWLQEQGENTYVPYILALQNHTFTENIKPFTTYLVWVRCIFNKILLGPFADVLVCNT</sequence>
<dbReference type="EC" id="2.4.1.312" evidence="1"/>
<dbReference type="EMBL" id="AJ868533">
    <property type="protein sequence ID" value="CAI30867.1"/>
    <property type="molecule type" value="mRNA"/>
</dbReference>
<dbReference type="RefSeq" id="NP_001012742.1">
    <property type="nucleotide sequence ID" value="NM_001012724.1"/>
</dbReference>
<dbReference type="RefSeq" id="XP_009443516.3">
    <property type="nucleotide sequence ID" value="XM_009445241.4"/>
</dbReference>
<dbReference type="RefSeq" id="XP_009443517.3">
    <property type="nucleotide sequence ID" value="XM_009445242.5"/>
</dbReference>
<dbReference type="SMR" id="Q5NDF1"/>
<dbReference type="FunCoup" id="Q5NDF1">
    <property type="interactions" value="624"/>
</dbReference>
<dbReference type="STRING" id="9598.ENSPTRP00000025525"/>
<dbReference type="CAZy" id="GT61">
    <property type="family name" value="Glycosyltransferase Family 61"/>
</dbReference>
<dbReference type="GlyCosmos" id="Q5NDF1">
    <property type="glycosylation" value="2 sites, No reported glycans"/>
</dbReference>
<dbReference type="PaxDb" id="9598-ENSPTRP00000025525"/>
<dbReference type="GeneID" id="503649"/>
<dbReference type="KEGG" id="ptr:503649"/>
<dbReference type="CTD" id="84892"/>
<dbReference type="eggNOG" id="KOG4698">
    <property type="taxonomic scope" value="Eukaryota"/>
</dbReference>
<dbReference type="HOGENOM" id="CLU_020169_0_0_1"/>
<dbReference type="InParanoid" id="Q5NDF1"/>
<dbReference type="TreeFam" id="TF332712"/>
<dbReference type="UniPathway" id="UPA00378"/>
<dbReference type="Proteomes" id="UP000002277">
    <property type="component" value="Unplaced"/>
</dbReference>
<dbReference type="GO" id="GO:0005783">
    <property type="term" value="C:endoplasmic reticulum"/>
    <property type="evidence" value="ECO:0000250"/>
    <property type="project" value="UniProtKB"/>
</dbReference>
<dbReference type="GO" id="GO:0005789">
    <property type="term" value="C:endoplasmic reticulum membrane"/>
    <property type="evidence" value="ECO:0007669"/>
    <property type="project" value="UniProtKB-SubCell"/>
</dbReference>
<dbReference type="GO" id="GO:0008375">
    <property type="term" value="F:acetylglucosaminyltransferase activity"/>
    <property type="evidence" value="ECO:0000250"/>
    <property type="project" value="UniProtKB"/>
</dbReference>
<dbReference type="GO" id="GO:0097363">
    <property type="term" value="F:protein O-acetylglucosaminyltransferase activity"/>
    <property type="evidence" value="ECO:0000318"/>
    <property type="project" value="GO_Central"/>
</dbReference>
<dbReference type="GO" id="GO:0001764">
    <property type="term" value="P:neuron migration"/>
    <property type="evidence" value="ECO:0000250"/>
    <property type="project" value="UniProtKB"/>
</dbReference>
<dbReference type="GO" id="GO:0006493">
    <property type="term" value="P:protein O-linked glycosylation"/>
    <property type="evidence" value="ECO:0000250"/>
    <property type="project" value="UniProtKB"/>
</dbReference>
<dbReference type="GO" id="GO:0035269">
    <property type="term" value="P:protein O-linked mannosylation"/>
    <property type="evidence" value="ECO:0000250"/>
    <property type="project" value="UniProtKB"/>
</dbReference>
<dbReference type="CDD" id="cd00063">
    <property type="entry name" value="FN3"/>
    <property type="match status" value="1"/>
</dbReference>
<dbReference type="Gene3D" id="2.60.40.10">
    <property type="entry name" value="Immunoglobulins"/>
    <property type="match status" value="1"/>
</dbReference>
<dbReference type="InterPro" id="IPR003961">
    <property type="entry name" value="FN3_dom"/>
</dbReference>
<dbReference type="InterPro" id="IPR036116">
    <property type="entry name" value="FN3_sf"/>
</dbReference>
<dbReference type="InterPro" id="IPR049625">
    <property type="entry name" value="Glyco_transf_61_cat"/>
</dbReference>
<dbReference type="InterPro" id="IPR007657">
    <property type="entry name" value="Glycosyltransferase_61"/>
</dbReference>
<dbReference type="InterPro" id="IPR013783">
    <property type="entry name" value="Ig-like_fold"/>
</dbReference>
<dbReference type="PANTHER" id="PTHR20961">
    <property type="entry name" value="GLYCOSYLTRANSFERASE"/>
    <property type="match status" value="1"/>
</dbReference>
<dbReference type="PANTHER" id="PTHR20961:SF38">
    <property type="entry name" value="PROTEIN O-LINKED-MANNOSE BETA-1,4-N-ACETYLGLUCOSAMINYLTRANSFERASE 2"/>
    <property type="match status" value="1"/>
</dbReference>
<dbReference type="Pfam" id="PF04577">
    <property type="entry name" value="Glyco_transf_61"/>
    <property type="match status" value="1"/>
</dbReference>
<dbReference type="SUPFAM" id="SSF49265">
    <property type="entry name" value="Fibronectin type III"/>
    <property type="match status" value="1"/>
</dbReference>
<dbReference type="PROSITE" id="PS50853">
    <property type="entry name" value="FN3"/>
    <property type="match status" value="1"/>
</dbReference>
<feature type="chain" id="PRO_0000249016" description="Protein O-linked-mannose beta-1,4-N-acetylglucosaminyltransferase 2">
    <location>
        <begin position="1"/>
        <end position="580"/>
    </location>
</feature>
<feature type="topological domain" description="Cytoplasmic" evidence="2">
    <location>
        <begin position="1"/>
        <end position="4"/>
    </location>
</feature>
<feature type="transmembrane region" description="Helical; Signal-anchor for type II membrane protein" evidence="2">
    <location>
        <begin position="5"/>
        <end position="25"/>
    </location>
</feature>
<feature type="topological domain" description="Lumenal" evidence="2">
    <location>
        <begin position="26"/>
        <end position="580"/>
    </location>
</feature>
<feature type="domain" description="Fibronectin type-III" evidence="3">
    <location>
        <begin position="488"/>
        <end position="580"/>
    </location>
</feature>
<feature type="glycosylation site" description="N-linked (GlcNAc...) asparagine" evidence="2">
    <location>
        <position position="99"/>
    </location>
</feature>
<feature type="glycosylation site" description="N-linked (GlcNAc...) asparagine" evidence="2">
    <location>
        <position position="276"/>
    </location>
</feature>
<name>PMGT2_PANTR</name>
<evidence type="ECO:0000250" key="1">
    <source>
        <dbReference type="UniProtKB" id="Q8NAT1"/>
    </source>
</evidence>
<evidence type="ECO:0000255" key="2"/>
<evidence type="ECO:0000255" key="3">
    <source>
        <dbReference type="PROSITE-ProRule" id="PRU00316"/>
    </source>
</evidence>
<evidence type="ECO:0000305" key="4"/>
<organism>
    <name type="scientific">Pan troglodytes</name>
    <name type="common">Chimpanzee</name>
    <dbReference type="NCBI Taxonomy" id="9598"/>
    <lineage>
        <taxon>Eukaryota</taxon>
        <taxon>Metazoa</taxon>
        <taxon>Chordata</taxon>
        <taxon>Craniata</taxon>
        <taxon>Vertebrata</taxon>
        <taxon>Euteleostomi</taxon>
        <taxon>Mammalia</taxon>
        <taxon>Eutheria</taxon>
        <taxon>Euarchontoglires</taxon>
        <taxon>Primates</taxon>
        <taxon>Haplorrhini</taxon>
        <taxon>Catarrhini</taxon>
        <taxon>Hominidae</taxon>
        <taxon>Pan</taxon>
    </lineage>
</organism>
<proteinExistence type="evidence at transcript level"/>